<feature type="chain" id="PRO_1000187759" description="Ubiquinone/menaquinone biosynthesis C-methyltransferase UbiE">
    <location>
        <begin position="1"/>
        <end position="251"/>
    </location>
</feature>
<feature type="binding site" evidence="1">
    <location>
        <position position="74"/>
    </location>
    <ligand>
        <name>S-adenosyl-L-methionine</name>
        <dbReference type="ChEBI" id="CHEBI:59789"/>
    </ligand>
</feature>
<feature type="binding site" evidence="1">
    <location>
        <position position="95"/>
    </location>
    <ligand>
        <name>S-adenosyl-L-methionine</name>
        <dbReference type="ChEBI" id="CHEBI:59789"/>
    </ligand>
</feature>
<feature type="binding site" evidence="1">
    <location>
        <begin position="123"/>
        <end position="124"/>
    </location>
    <ligand>
        <name>S-adenosyl-L-methionine</name>
        <dbReference type="ChEBI" id="CHEBI:59789"/>
    </ligand>
</feature>
<feature type="binding site" evidence="1">
    <location>
        <position position="140"/>
    </location>
    <ligand>
        <name>S-adenosyl-L-methionine</name>
        <dbReference type="ChEBI" id="CHEBI:59789"/>
    </ligand>
</feature>
<comment type="function">
    <text evidence="1">Methyltransferase required for the conversion of demethylmenaquinol (DMKH2) to menaquinol (MKH2) and the conversion of 2-polyprenyl-6-methoxy-1,4-benzoquinol (DDMQH2) to 2-polyprenyl-3-methyl-6-methoxy-1,4-benzoquinol (DMQH2).</text>
</comment>
<comment type="catalytic activity">
    <reaction evidence="1">
        <text>a 2-demethylmenaquinol + S-adenosyl-L-methionine = a menaquinol + S-adenosyl-L-homocysteine + H(+)</text>
        <dbReference type="Rhea" id="RHEA:42640"/>
        <dbReference type="Rhea" id="RHEA-COMP:9539"/>
        <dbReference type="Rhea" id="RHEA-COMP:9563"/>
        <dbReference type="ChEBI" id="CHEBI:15378"/>
        <dbReference type="ChEBI" id="CHEBI:18151"/>
        <dbReference type="ChEBI" id="CHEBI:55437"/>
        <dbReference type="ChEBI" id="CHEBI:57856"/>
        <dbReference type="ChEBI" id="CHEBI:59789"/>
        <dbReference type="EC" id="2.1.1.163"/>
    </reaction>
</comment>
<comment type="catalytic activity">
    <reaction evidence="1">
        <text>a 2-methoxy-6-(all-trans-polyprenyl)benzene-1,4-diol + S-adenosyl-L-methionine = a 5-methoxy-2-methyl-3-(all-trans-polyprenyl)benzene-1,4-diol + S-adenosyl-L-homocysteine + H(+)</text>
        <dbReference type="Rhea" id="RHEA:28286"/>
        <dbReference type="Rhea" id="RHEA-COMP:10858"/>
        <dbReference type="Rhea" id="RHEA-COMP:10859"/>
        <dbReference type="ChEBI" id="CHEBI:15378"/>
        <dbReference type="ChEBI" id="CHEBI:57856"/>
        <dbReference type="ChEBI" id="CHEBI:59789"/>
        <dbReference type="ChEBI" id="CHEBI:84166"/>
        <dbReference type="ChEBI" id="CHEBI:84167"/>
        <dbReference type="EC" id="2.1.1.201"/>
    </reaction>
</comment>
<comment type="pathway">
    <text evidence="1">Quinol/quinone metabolism; menaquinone biosynthesis; menaquinol from 1,4-dihydroxy-2-naphthoate: step 2/2.</text>
</comment>
<comment type="pathway">
    <text evidence="1">Cofactor biosynthesis; ubiquinone biosynthesis.</text>
</comment>
<comment type="similarity">
    <text evidence="1">Belongs to the class I-like SAM-binding methyltransferase superfamily. MenG/UbiE family.</text>
</comment>
<evidence type="ECO:0000255" key="1">
    <source>
        <dbReference type="HAMAP-Rule" id="MF_01813"/>
    </source>
</evidence>
<organism>
    <name type="scientific">Escherichia coli O81 (strain ED1a)</name>
    <dbReference type="NCBI Taxonomy" id="585397"/>
    <lineage>
        <taxon>Bacteria</taxon>
        <taxon>Pseudomonadati</taxon>
        <taxon>Pseudomonadota</taxon>
        <taxon>Gammaproteobacteria</taxon>
        <taxon>Enterobacterales</taxon>
        <taxon>Enterobacteriaceae</taxon>
        <taxon>Escherichia</taxon>
    </lineage>
</organism>
<keyword id="KW-0474">Menaquinone biosynthesis</keyword>
<keyword id="KW-0489">Methyltransferase</keyword>
<keyword id="KW-0949">S-adenosyl-L-methionine</keyword>
<keyword id="KW-0808">Transferase</keyword>
<keyword id="KW-0831">Ubiquinone biosynthesis</keyword>
<sequence length="251" mass="28103">MVDKSQETTHFGFQTVAKEQKADMVAHVFHSVASKYDVMNDLMSFGIHRLWKRFTIDCSGVRRGQTVLDLAGGTGDLTAKFSRLVGETGKVVLADINESMLKMGREKLRNIGVIGNVEYVQANAEALPFPDNTFDCITISFGLRNVTDKDKALRSMYRVLKPGGRLLVLEFSKPIIEPLSKAYDAYSFHVLPRIGSLVANDADSYRYLAESIRMHPDQDTLKTMMQDAGFESVDYYNLTAGVVALHRGYKF</sequence>
<proteinExistence type="inferred from homology"/>
<accession>B7N2E1</accession>
<name>UBIE_ECO81</name>
<dbReference type="EC" id="2.1.1.163" evidence="1"/>
<dbReference type="EC" id="2.1.1.201" evidence="1"/>
<dbReference type="EMBL" id="CU928162">
    <property type="protein sequence ID" value="CAR10512.1"/>
    <property type="molecule type" value="Genomic_DNA"/>
</dbReference>
<dbReference type="RefSeq" id="WP_000227959.1">
    <property type="nucleotide sequence ID" value="NC_011745.1"/>
</dbReference>
<dbReference type="SMR" id="B7N2E1"/>
<dbReference type="KEGG" id="ecq:ECED1_4537"/>
<dbReference type="HOGENOM" id="CLU_037990_0_0_6"/>
<dbReference type="UniPathway" id="UPA00079">
    <property type="reaction ID" value="UER00169"/>
</dbReference>
<dbReference type="UniPathway" id="UPA00232"/>
<dbReference type="Proteomes" id="UP000000748">
    <property type="component" value="Chromosome"/>
</dbReference>
<dbReference type="GO" id="GO:0008425">
    <property type="term" value="F:2-methoxy-6-polyprenyl-1,4-benzoquinol methyltransferase activity"/>
    <property type="evidence" value="ECO:0007669"/>
    <property type="project" value="UniProtKB-UniRule"/>
</dbReference>
<dbReference type="GO" id="GO:0043770">
    <property type="term" value="F:demethylmenaquinone methyltransferase activity"/>
    <property type="evidence" value="ECO:0007669"/>
    <property type="project" value="UniProtKB-UniRule"/>
</dbReference>
<dbReference type="GO" id="GO:0009060">
    <property type="term" value="P:aerobic respiration"/>
    <property type="evidence" value="ECO:0007669"/>
    <property type="project" value="UniProtKB-UniRule"/>
</dbReference>
<dbReference type="GO" id="GO:0009234">
    <property type="term" value="P:menaquinone biosynthetic process"/>
    <property type="evidence" value="ECO:0007669"/>
    <property type="project" value="UniProtKB-UniRule"/>
</dbReference>
<dbReference type="GO" id="GO:0032259">
    <property type="term" value="P:methylation"/>
    <property type="evidence" value="ECO:0007669"/>
    <property type="project" value="UniProtKB-KW"/>
</dbReference>
<dbReference type="CDD" id="cd02440">
    <property type="entry name" value="AdoMet_MTases"/>
    <property type="match status" value="1"/>
</dbReference>
<dbReference type="FunFam" id="3.40.50.150:FF:000014">
    <property type="entry name" value="Ubiquinone/menaquinone biosynthesis C-methyltransferase UbiE"/>
    <property type="match status" value="1"/>
</dbReference>
<dbReference type="Gene3D" id="3.40.50.150">
    <property type="entry name" value="Vaccinia Virus protein VP39"/>
    <property type="match status" value="1"/>
</dbReference>
<dbReference type="HAMAP" id="MF_01813">
    <property type="entry name" value="MenG_UbiE_methyltr"/>
    <property type="match status" value="1"/>
</dbReference>
<dbReference type="InterPro" id="IPR029063">
    <property type="entry name" value="SAM-dependent_MTases_sf"/>
</dbReference>
<dbReference type="InterPro" id="IPR004033">
    <property type="entry name" value="UbiE/COQ5_MeTrFase"/>
</dbReference>
<dbReference type="InterPro" id="IPR023576">
    <property type="entry name" value="UbiE/COQ5_MeTrFase_CS"/>
</dbReference>
<dbReference type="NCBIfam" id="TIGR01934">
    <property type="entry name" value="MenG_MenH_UbiE"/>
    <property type="match status" value="1"/>
</dbReference>
<dbReference type="NCBIfam" id="NF001240">
    <property type="entry name" value="PRK00216.1-1"/>
    <property type="match status" value="1"/>
</dbReference>
<dbReference type="NCBIfam" id="NF001242">
    <property type="entry name" value="PRK00216.1-3"/>
    <property type="match status" value="1"/>
</dbReference>
<dbReference type="NCBIfam" id="NF001244">
    <property type="entry name" value="PRK00216.1-5"/>
    <property type="match status" value="1"/>
</dbReference>
<dbReference type="PANTHER" id="PTHR43591:SF24">
    <property type="entry name" value="2-METHOXY-6-POLYPRENYL-1,4-BENZOQUINOL METHYLASE, MITOCHONDRIAL"/>
    <property type="match status" value="1"/>
</dbReference>
<dbReference type="PANTHER" id="PTHR43591">
    <property type="entry name" value="METHYLTRANSFERASE"/>
    <property type="match status" value="1"/>
</dbReference>
<dbReference type="Pfam" id="PF01209">
    <property type="entry name" value="Ubie_methyltran"/>
    <property type="match status" value="1"/>
</dbReference>
<dbReference type="SUPFAM" id="SSF53335">
    <property type="entry name" value="S-adenosyl-L-methionine-dependent methyltransferases"/>
    <property type="match status" value="1"/>
</dbReference>
<dbReference type="PROSITE" id="PS51608">
    <property type="entry name" value="SAM_MT_UBIE"/>
    <property type="match status" value="1"/>
</dbReference>
<dbReference type="PROSITE" id="PS01183">
    <property type="entry name" value="UBIE_1"/>
    <property type="match status" value="1"/>
</dbReference>
<dbReference type="PROSITE" id="PS01184">
    <property type="entry name" value="UBIE_2"/>
    <property type="match status" value="1"/>
</dbReference>
<protein>
    <recommendedName>
        <fullName evidence="1">Ubiquinone/menaquinone biosynthesis C-methyltransferase UbiE</fullName>
        <ecNumber evidence="1">2.1.1.163</ecNumber>
        <ecNumber evidence="1">2.1.1.201</ecNumber>
    </recommendedName>
    <alternativeName>
        <fullName evidence="1">2-methoxy-6-polyprenyl-1,4-benzoquinol methylase</fullName>
    </alternativeName>
    <alternativeName>
        <fullName evidence="1">Demethylmenaquinone methyltransferase</fullName>
    </alternativeName>
</protein>
<reference key="1">
    <citation type="journal article" date="2009" name="PLoS Genet.">
        <title>Organised genome dynamics in the Escherichia coli species results in highly diverse adaptive paths.</title>
        <authorList>
            <person name="Touchon M."/>
            <person name="Hoede C."/>
            <person name="Tenaillon O."/>
            <person name="Barbe V."/>
            <person name="Baeriswyl S."/>
            <person name="Bidet P."/>
            <person name="Bingen E."/>
            <person name="Bonacorsi S."/>
            <person name="Bouchier C."/>
            <person name="Bouvet O."/>
            <person name="Calteau A."/>
            <person name="Chiapello H."/>
            <person name="Clermont O."/>
            <person name="Cruveiller S."/>
            <person name="Danchin A."/>
            <person name="Diard M."/>
            <person name="Dossat C."/>
            <person name="Karoui M.E."/>
            <person name="Frapy E."/>
            <person name="Garry L."/>
            <person name="Ghigo J.M."/>
            <person name="Gilles A.M."/>
            <person name="Johnson J."/>
            <person name="Le Bouguenec C."/>
            <person name="Lescat M."/>
            <person name="Mangenot S."/>
            <person name="Martinez-Jehanne V."/>
            <person name="Matic I."/>
            <person name="Nassif X."/>
            <person name="Oztas S."/>
            <person name="Petit M.A."/>
            <person name="Pichon C."/>
            <person name="Rouy Z."/>
            <person name="Ruf C.S."/>
            <person name="Schneider D."/>
            <person name="Tourret J."/>
            <person name="Vacherie B."/>
            <person name="Vallenet D."/>
            <person name="Medigue C."/>
            <person name="Rocha E.P.C."/>
            <person name="Denamur E."/>
        </authorList>
    </citation>
    <scope>NUCLEOTIDE SEQUENCE [LARGE SCALE GENOMIC DNA]</scope>
    <source>
        <strain>ED1a</strain>
    </source>
</reference>
<gene>
    <name evidence="1" type="primary">ubiE</name>
    <name type="ordered locus">ECED1_4537</name>
</gene>